<dbReference type="EC" id="7.1.1.-" evidence="1"/>
<dbReference type="EMBL" id="AE017197">
    <property type="protein sequence ID" value="AAU03826.1"/>
    <property type="molecule type" value="Genomic_DNA"/>
</dbReference>
<dbReference type="RefSeq" id="WP_011190810.1">
    <property type="nucleotide sequence ID" value="NC_006142.1"/>
</dbReference>
<dbReference type="SMR" id="Q68X16"/>
<dbReference type="KEGG" id="rty:RT0346"/>
<dbReference type="eggNOG" id="COG0838">
    <property type="taxonomic scope" value="Bacteria"/>
</dbReference>
<dbReference type="HOGENOM" id="CLU_119549_3_1_5"/>
<dbReference type="OrthoDB" id="9791970at2"/>
<dbReference type="Proteomes" id="UP000000604">
    <property type="component" value="Chromosome"/>
</dbReference>
<dbReference type="GO" id="GO:0030964">
    <property type="term" value="C:NADH dehydrogenase complex"/>
    <property type="evidence" value="ECO:0007669"/>
    <property type="project" value="TreeGrafter"/>
</dbReference>
<dbReference type="GO" id="GO:0005886">
    <property type="term" value="C:plasma membrane"/>
    <property type="evidence" value="ECO:0007669"/>
    <property type="project" value="UniProtKB-SubCell"/>
</dbReference>
<dbReference type="GO" id="GO:0008137">
    <property type="term" value="F:NADH dehydrogenase (ubiquinone) activity"/>
    <property type="evidence" value="ECO:0007669"/>
    <property type="project" value="InterPro"/>
</dbReference>
<dbReference type="GO" id="GO:0050136">
    <property type="term" value="F:NADH:ubiquinone reductase (non-electrogenic) activity"/>
    <property type="evidence" value="ECO:0007669"/>
    <property type="project" value="UniProtKB-UniRule"/>
</dbReference>
<dbReference type="GO" id="GO:0048038">
    <property type="term" value="F:quinone binding"/>
    <property type="evidence" value="ECO:0007669"/>
    <property type="project" value="UniProtKB-KW"/>
</dbReference>
<dbReference type="FunFam" id="1.20.58.1610:FF:000004">
    <property type="entry name" value="NADH-quinone oxidoreductase subunit A"/>
    <property type="match status" value="1"/>
</dbReference>
<dbReference type="Gene3D" id="1.20.58.1610">
    <property type="entry name" value="NADH:ubiquinone/plastoquinone oxidoreductase, chain 3"/>
    <property type="match status" value="1"/>
</dbReference>
<dbReference type="HAMAP" id="MF_01394">
    <property type="entry name" value="NDH1_NuoA"/>
    <property type="match status" value="1"/>
</dbReference>
<dbReference type="InterPro" id="IPR023043">
    <property type="entry name" value="NAD(P)H_OxRDtase_bac/plastid"/>
</dbReference>
<dbReference type="InterPro" id="IPR000440">
    <property type="entry name" value="NADH_UbQ/plastoQ_OxRdtase_su3"/>
</dbReference>
<dbReference type="InterPro" id="IPR038430">
    <property type="entry name" value="NDAH_ubi_oxred_su3_sf"/>
</dbReference>
<dbReference type="PANTHER" id="PTHR11058">
    <property type="entry name" value="NADH-UBIQUINONE OXIDOREDUCTASE CHAIN 3"/>
    <property type="match status" value="1"/>
</dbReference>
<dbReference type="PANTHER" id="PTHR11058:SF9">
    <property type="entry name" value="NADH-UBIQUINONE OXIDOREDUCTASE CHAIN 3"/>
    <property type="match status" value="1"/>
</dbReference>
<dbReference type="Pfam" id="PF00507">
    <property type="entry name" value="Oxidored_q4"/>
    <property type="match status" value="1"/>
</dbReference>
<name>NUOA_RICTY</name>
<protein>
    <recommendedName>
        <fullName evidence="1">NADH-quinone oxidoreductase subunit A</fullName>
        <ecNumber evidence="1">7.1.1.-</ecNumber>
    </recommendedName>
    <alternativeName>
        <fullName evidence="1">NADH dehydrogenase I subunit A</fullName>
    </alternativeName>
    <alternativeName>
        <fullName evidence="1">NDH-1 subunit A</fullName>
    </alternativeName>
    <alternativeName>
        <fullName evidence="1">NUO1</fullName>
    </alternativeName>
</protein>
<comment type="function">
    <text evidence="1">NDH-1 shuttles electrons from NADH, via FMN and iron-sulfur (Fe-S) centers, to quinones in the respiratory chain. The immediate electron acceptor for the enzyme in this species is believed to be ubiquinone. Couples the redox reaction to proton translocation (for every two electrons transferred, four hydrogen ions are translocated across the cytoplasmic membrane), and thus conserves the redox energy in a proton gradient.</text>
</comment>
<comment type="catalytic activity">
    <reaction evidence="1">
        <text>a quinone + NADH + 5 H(+)(in) = a quinol + NAD(+) + 4 H(+)(out)</text>
        <dbReference type="Rhea" id="RHEA:57888"/>
        <dbReference type="ChEBI" id="CHEBI:15378"/>
        <dbReference type="ChEBI" id="CHEBI:24646"/>
        <dbReference type="ChEBI" id="CHEBI:57540"/>
        <dbReference type="ChEBI" id="CHEBI:57945"/>
        <dbReference type="ChEBI" id="CHEBI:132124"/>
    </reaction>
</comment>
<comment type="subunit">
    <text evidence="1">NDH-1 is composed of 14 different subunits. Subunits NuoA, H, J, K, L, M, N constitute the membrane sector of the complex.</text>
</comment>
<comment type="subcellular location">
    <subcellularLocation>
        <location evidence="1">Cell inner membrane</location>
        <topology evidence="1">Multi-pass membrane protein</topology>
    </subcellularLocation>
</comment>
<comment type="similarity">
    <text evidence="1">Belongs to the complex I subunit 3 family.</text>
</comment>
<accession>Q68X16</accession>
<reference key="1">
    <citation type="journal article" date="2004" name="J. Bacteriol.">
        <title>Complete genome sequence of Rickettsia typhi and comparison with sequences of other Rickettsiae.</title>
        <authorList>
            <person name="McLeod M.P."/>
            <person name="Qin X."/>
            <person name="Karpathy S.E."/>
            <person name="Gioia J."/>
            <person name="Highlander S.K."/>
            <person name="Fox G.E."/>
            <person name="McNeill T.Z."/>
            <person name="Jiang H."/>
            <person name="Muzny D."/>
            <person name="Jacob L.S."/>
            <person name="Hawes A.C."/>
            <person name="Sodergren E."/>
            <person name="Gill R."/>
            <person name="Hume J."/>
            <person name="Morgan M."/>
            <person name="Fan G."/>
            <person name="Amin A.G."/>
            <person name="Gibbs R.A."/>
            <person name="Hong C."/>
            <person name="Yu X.-J."/>
            <person name="Walker D.H."/>
            <person name="Weinstock G.M."/>
        </authorList>
    </citation>
    <scope>NUCLEOTIDE SEQUENCE [LARGE SCALE GENOMIC DNA]</scope>
    <source>
        <strain>ATCC VR-144 / Wilmington</strain>
    </source>
</reference>
<feature type="chain" id="PRO_0000271222" description="NADH-quinone oxidoreductase subunit A">
    <location>
        <begin position="1"/>
        <end position="123"/>
    </location>
</feature>
<feature type="transmembrane region" description="Helical" evidence="1">
    <location>
        <begin position="11"/>
        <end position="31"/>
    </location>
</feature>
<feature type="transmembrane region" description="Helical" evidence="1">
    <location>
        <begin position="68"/>
        <end position="88"/>
    </location>
</feature>
<feature type="transmembrane region" description="Helical" evidence="1">
    <location>
        <begin position="93"/>
        <end position="113"/>
    </location>
</feature>
<proteinExistence type="inferred from homology"/>
<sequence>MLQNSELLHEYLPIAIFFGIAVLVSGLIMMLPNLLSTKKYNKDKLEPYECGFAPFSDARSKFDIRFYLVAILFIIFDLEITFLVPWAISLNTIGKIGFFSMMFFLFVLIIGFIYEWTKGALDW</sequence>
<keyword id="KW-0997">Cell inner membrane</keyword>
<keyword id="KW-1003">Cell membrane</keyword>
<keyword id="KW-0472">Membrane</keyword>
<keyword id="KW-0520">NAD</keyword>
<keyword id="KW-0874">Quinone</keyword>
<keyword id="KW-1278">Translocase</keyword>
<keyword id="KW-0812">Transmembrane</keyword>
<keyword id="KW-1133">Transmembrane helix</keyword>
<keyword id="KW-0813">Transport</keyword>
<keyword id="KW-0830">Ubiquinone</keyword>
<evidence type="ECO:0000255" key="1">
    <source>
        <dbReference type="HAMAP-Rule" id="MF_01394"/>
    </source>
</evidence>
<organism>
    <name type="scientific">Rickettsia typhi (strain ATCC VR-144 / Wilmington)</name>
    <dbReference type="NCBI Taxonomy" id="257363"/>
    <lineage>
        <taxon>Bacteria</taxon>
        <taxon>Pseudomonadati</taxon>
        <taxon>Pseudomonadota</taxon>
        <taxon>Alphaproteobacteria</taxon>
        <taxon>Rickettsiales</taxon>
        <taxon>Rickettsiaceae</taxon>
        <taxon>Rickettsieae</taxon>
        <taxon>Rickettsia</taxon>
        <taxon>typhus group</taxon>
    </lineage>
</organism>
<gene>
    <name evidence="1" type="primary">nuoA</name>
    <name type="ordered locus">RT0346</name>
</gene>